<accession>C6DFZ2</accession>
<sequence>MALTKAEMSEYLFEKLGLSKRDAKELVELFFEEVRRALENGEQVKLSGFGNFDLRDKNQRPGRNPKTGEDIPITARRVVTFRPGQKLKSRVENASPKE</sequence>
<gene>
    <name evidence="1" type="primary">ihfA</name>
    <name evidence="1" type="synonym">himA</name>
    <name type="ordered locus">PC1_1894</name>
</gene>
<name>IHFA_PECCP</name>
<organism>
    <name type="scientific">Pectobacterium carotovorum subsp. carotovorum (strain PC1)</name>
    <dbReference type="NCBI Taxonomy" id="561230"/>
    <lineage>
        <taxon>Bacteria</taxon>
        <taxon>Pseudomonadati</taxon>
        <taxon>Pseudomonadota</taxon>
        <taxon>Gammaproteobacteria</taxon>
        <taxon>Enterobacterales</taxon>
        <taxon>Pectobacteriaceae</taxon>
        <taxon>Pectobacterium</taxon>
    </lineage>
</organism>
<protein>
    <recommendedName>
        <fullName evidence="1">Integration host factor subunit alpha</fullName>
        <shortName evidence="1">IHF-alpha</shortName>
    </recommendedName>
</protein>
<feature type="chain" id="PRO_1000205691" description="Integration host factor subunit alpha">
    <location>
        <begin position="1"/>
        <end position="98"/>
    </location>
</feature>
<feature type="region of interest" description="Disordered" evidence="2">
    <location>
        <begin position="49"/>
        <end position="71"/>
    </location>
</feature>
<dbReference type="EMBL" id="CP001657">
    <property type="protein sequence ID" value="ACT12935.1"/>
    <property type="molecule type" value="Genomic_DNA"/>
</dbReference>
<dbReference type="RefSeq" id="WP_009112984.1">
    <property type="nucleotide sequence ID" value="NC_012917.1"/>
</dbReference>
<dbReference type="SMR" id="C6DFZ2"/>
<dbReference type="STRING" id="561230.PC1_1894"/>
<dbReference type="GeneID" id="93390139"/>
<dbReference type="KEGG" id="pct:PC1_1894"/>
<dbReference type="eggNOG" id="COG0776">
    <property type="taxonomic scope" value="Bacteria"/>
</dbReference>
<dbReference type="HOGENOM" id="CLU_105066_1_3_6"/>
<dbReference type="OrthoDB" id="9797747at2"/>
<dbReference type="Proteomes" id="UP000002736">
    <property type="component" value="Chromosome"/>
</dbReference>
<dbReference type="GO" id="GO:0005829">
    <property type="term" value="C:cytosol"/>
    <property type="evidence" value="ECO:0007669"/>
    <property type="project" value="TreeGrafter"/>
</dbReference>
<dbReference type="GO" id="GO:0003677">
    <property type="term" value="F:DNA binding"/>
    <property type="evidence" value="ECO:0007669"/>
    <property type="project" value="UniProtKB-UniRule"/>
</dbReference>
<dbReference type="GO" id="GO:0030527">
    <property type="term" value="F:structural constituent of chromatin"/>
    <property type="evidence" value="ECO:0007669"/>
    <property type="project" value="InterPro"/>
</dbReference>
<dbReference type="GO" id="GO:0006310">
    <property type="term" value="P:DNA recombination"/>
    <property type="evidence" value="ECO:0007669"/>
    <property type="project" value="UniProtKB-UniRule"/>
</dbReference>
<dbReference type="GO" id="GO:0009893">
    <property type="term" value="P:positive regulation of metabolic process"/>
    <property type="evidence" value="ECO:0007669"/>
    <property type="project" value="UniProtKB-ARBA"/>
</dbReference>
<dbReference type="GO" id="GO:0006355">
    <property type="term" value="P:regulation of DNA-templated transcription"/>
    <property type="evidence" value="ECO:0007669"/>
    <property type="project" value="UniProtKB-UniRule"/>
</dbReference>
<dbReference type="GO" id="GO:0006417">
    <property type="term" value="P:regulation of translation"/>
    <property type="evidence" value="ECO:0007669"/>
    <property type="project" value="UniProtKB-UniRule"/>
</dbReference>
<dbReference type="CDD" id="cd13835">
    <property type="entry name" value="IHF_A"/>
    <property type="match status" value="1"/>
</dbReference>
<dbReference type="FunFam" id="4.10.520.10:FF:000002">
    <property type="entry name" value="Integration host factor subunit alpha"/>
    <property type="match status" value="1"/>
</dbReference>
<dbReference type="Gene3D" id="4.10.520.10">
    <property type="entry name" value="IHF-like DNA-binding proteins"/>
    <property type="match status" value="1"/>
</dbReference>
<dbReference type="HAMAP" id="MF_00380">
    <property type="entry name" value="IHF_alpha"/>
    <property type="match status" value="1"/>
</dbReference>
<dbReference type="InterPro" id="IPR000119">
    <property type="entry name" value="Hist_DNA-bd"/>
</dbReference>
<dbReference type="InterPro" id="IPR020816">
    <property type="entry name" value="Histone-like_DNA-bd_CS"/>
</dbReference>
<dbReference type="InterPro" id="IPR010992">
    <property type="entry name" value="IHF-like_DNA-bd_dom_sf"/>
</dbReference>
<dbReference type="InterPro" id="IPR005684">
    <property type="entry name" value="IHF_alpha"/>
</dbReference>
<dbReference type="NCBIfam" id="TIGR00987">
    <property type="entry name" value="himA"/>
    <property type="match status" value="1"/>
</dbReference>
<dbReference type="NCBIfam" id="NF001401">
    <property type="entry name" value="PRK00285.1"/>
    <property type="match status" value="1"/>
</dbReference>
<dbReference type="PANTHER" id="PTHR33175">
    <property type="entry name" value="DNA-BINDING PROTEIN HU"/>
    <property type="match status" value="1"/>
</dbReference>
<dbReference type="PANTHER" id="PTHR33175:SF2">
    <property type="entry name" value="INTEGRATION HOST FACTOR SUBUNIT ALPHA"/>
    <property type="match status" value="1"/>
</dbReference>
<dbReference type="Pfam" id="PF00216">
    <property type="entry name" value="Bac_DNA_binding"/>
    <property type="match status" value="1"/>
</dbReference>
<dbReference type="PRINTS" id="PR01727">
    <property type="entry name" value="DNABINDINGHU"/>
</dbReference>
<dbReference type="SMART" id="SM00411">
    <property type="entry name" value="BHL"/>
    <property type="match status" value="1"/>
</dbReference>
<dbReference type="SUPFAM" id="SSF47729">
    <property type="entry name" value="IHF-like DNA-binding proteins"/>
    <property type="match status" value="1"/>
</dbReference>
<dbReference type="PROSITE" id="PS00045">
    <property type="entry name" value="HISTONE_LIKE"/>
    <property type="match status" value="1"/>
</dbReference>
<comment type="function">
    <text evidence="1">This protein is one of the two subunits of integration host factor, a specific DNA-binding protein that functions in genetic recombination as well as in transcriptional and translational control.</text>
</comment>
<comment type="subunit">
    <text evidence="1">Heterodimer of an alpha and a beta chain.</text>
</comment>
<comment type="similarity">
    <text evidence="1">Belongs to the bacterial histone-like protein family.</text>
</comment>
<proteinExistence type="inferred from homology"/>
<keyword id="KW-0233">DNA recombination</keyword>
<keyword id="KW-0238">DNA-binding</keyword>
<keyword id="KW-0804">Transcription</keyword>
<keyword id="KW-0805">Transcription regulation</keyword>
<keyword id="KW-0810">Translation regulation</keyword>
<evidence type="ECO:0000255" key="1">
    <source>
        <dbReference type="HAMAP-Rule" id="MF_00380"/>
    </source>
</evidence>
<evidence type="ECO:0000256" key="2">
    <source>
        <dbReference type="SAM" id="MobiDB-lite"/>
    </source>
</evidence>
<reference key="1">
    <citation type="submission" date="2009-07" db="EMBL/GenBank/DDBJ databases">
        <title>Complete sequence of Pectobacterium carotovorum subsp. carotovorum PC1.</title>
        <authorList>
            <consortium name="US DOE Joint Genome Institute"/>
            <person name="Lucas S."/>
            <person name="Copeland A."/>
            <person name="Lapidus A."/>
            <person name="Glavina del Rio T."/>
            <person name="Tice H."/>
            <person name="Bruce D."/>
            <person name="Goodwin L."/>
            <person name="Pitluck S."/>
            <person name="Munk A.C."/>
            <person name="Brettin T."/>
            <person name="Detter J.C."/>
            <person name="Han C."/>
            <person name="Tapia R."/>
            <person name="Larimer F."/>
            <person name="Land M."/>
            <person name="Hauser L."/>
            <person name="Kyrpides N."/>
            <person name="Mikhailova N."/>
            <person name="Balakrishnan V."/>
            <person name="Glasner J."/>
            <person name="Perna N.T."/>
        </authorList>
    </citation>
    <scope>NUCLEOTIDE SEQUENCE [LARGE SCALE GENOMIC DNA]</scope>
    <source>
        <strain>PC1</strain>
    </source>
</reference>